<accession>A9MNA2</accession>
<sequence length="293" mass="31942">MPWIQLKLNTTGANAEELSDALMEAGAVSITFQDTHDTPVFEPLPGETRLWGDTDVIGLFDAETDMKDVVAILEQHPLLGAGFAHKIEQLEDKDWEREWMDNFHPMRFGERLWICPSWRDIPDENAVNVMLDPGLAFGTGTHPTTSLCLQWLDGLDLNGKTVIDFGCGSGILAIAALKLGAAKAIGVDIDPQAIQASRDNAERNGVSDRLELYLPKDQPDAMKADVVVANILAGPLRELAPLISVLPVEGGLLGLSGILASQAESVCDAYAELFTLDPVVEKEEWCRITGRKK</sequence>
<evidence type="ECO:0000255" key="1">
    <source>
        <dbReference type="HAMAP-Rule" id="MF_00735"/>
    </source>
</evidence>
<reference key="1">
    <citation type="submission" date="2007-11" db="EMBL/GenBank/DDBJ databases">
        <authorList>
            <consortium name="The Salmonella enterica serovar Arizonae Genome Sequencing Project"/>
            <person name="McClelland M."/>
            <person name="Sanderson E.K."/>
            <person name="Porwollik S."/>
            <person name="Spieth J."/>
            <person name="Clifton W.S."/>
            <person name="Fulton R."/>
            <person name="Chunyan W."/>
            <person name="Wollam A."/>
            <person name="Shah N."/>
            <person name="Pepin K."/>
            <person name="Bhonagiri V."/>
            <person name="Nash W."/>
            <person name="Johnson M."/>
            <person name="Thiruvilangam P."/>
            <person name="Wilson R."/>
        </authorList>
    </citation>
    <scope>NUCLEOTIDE SEQUENCE [LARGE SCALE GENOMIC DNA]</scope>
    <source>
        <strain>ATCC BAA-731 / CDC346-86 / RSK2980</strain>
    </source>
</reference>
<organism>
    <name type="scientific">Salmonella arizonae (strain ATCC BAA-731 / CDC346-86 / RSK2980)</name>
    <dbReference type="NCBI Taxonomy" id="41514"/>
    <lineage>
        <taxon>Bacteria</taxon>
        <taxon>Pseudomonadati</taxon>
        <taxon>Pseudomonadota</taxon>
        <taxon>Gammaproteobacteria</taxon>
        <taxon>Enterobacterales</taxon>
        <taxon>Enterobacteriaceae</taxon>
        <taxon>Salmonella</taxon>
    </lineage>
</organism>
<name>PRMA_SALAR</name>
<gene>
    <name evidence="1" type="primary">prmA</name>
    <name type="ordered locus">SARI_04249</name>
</gene>
<proteinExistence type="inferred from homology"/>
<keyword id="KW-0963">Cytoplasm</keyword>
<keyword id="KW-0489">Methyltransferase</keyword>
<keyword id="KW-1185">Reference proteome</keyword>
<keyword id="KW-0949">S-adenosyl-L-methionine</keyword>
<keyword id="KW-0808">Transferase</keyword>
<comment type="function">
    <text evidence="1">Methylates ribosomal protein L11.</text>
</comment>
<comment type="catalytic activity">
    <reaction evidence="1">
        <text>L-lysyl-[protein] + 3 S-adenosyl-L-methionine = N(6),N(6),N(6)-trimethyl-L-lysyl-[protein] + 3 S-adenosyl-L-homocysteine + 3 H(+)</text>
        <dbReference type="Rhea" id="RHEA:54192"/>
        <dbReference type="Rhea" id="RHEA-COMP:9752"/>
        <dbReference type="Rhea" id="RHEA-COMP:13826"/>
        <dbReference type="ChEBI" id="CHEBI:15378"/>
        <dbReference type="ChEBI" id="CHEBI:29969"/>
        <dbReference type="ChEBI" id="CHEBI:57856"/>
        <dbReference type="ChEBI" id="CHEBI:59789"/>
        <dbReference type="ChEBI" id="CHEBI:61961"/>
    </reaction>
</comment>
<comment type="subcellular location">
    <subcellularLocation>
        <location evidence="1">Cytoplasm</location>
    </subcellularLocation>
</comment>
<comment type="similarity">
    <text evidence="1">Belongs to the methyltransferase superfamily. PrmA family.</text>
</comment>
<dbReference type="EC" id="2.1.1.-" evidence="1"/>
<dbReference type="EMBL" id="CP000880">
    <property type="protein sequence ID" value="ABX24032.1"/>
    <property type="molecule type" value="Genomic_DNA"/>
</dbReference>
<dbReference type="SMR" id="A9MNA2"/>
<dbReference type="STRING" id="41514.SARI_04249"/>
<dbReference type="KEGG" id="ses:SARI_04249"/>
<dbReference type="HOGENOM" id="CLU_049382_4_1_6"/>
<dbReference type="Proteomes" id="UP000002084">
    <property type="component" value="Chromosome"/>
</dbReference>
<dbReference type="GO" id="GO:0005829">
    <property type="term" value="C:cytosol"/>
    <property type="evidence" value="ECO:0007669"/>
    <property type="project" value="TreeGrafter"/>
</dbReference>
<dbReference type="GO" id="GO:0016279">
    <property type="term" value="F:protein-lysine N-methyltransferase activity"/>
    <property type="evidence" value="ECO:0007669"/>
    <property type="project" value="TreeGrafter"/>
</dbReference>
<dbReference type="GO" id="GO:0032259">
    <property type="term" value="P:methylation"/>
    <property type="evidence" value="ECO:0007669"/>
    <property type="project" value="UniProtKB-KW"/>
</dbReference>
<dbReference type="CDD" id="cd02440">
    <property type="entry name" value="AdoMet_MTases"/>
    <property type="match status" value="1"/>
</dbReference>
<dbReference type="FunFam" id="3.40.50.150:FF:000021">
    <property type="entry name" value="Ribosomal protein L11 methyltransferase"/>
    <property type="match status" value="1"/>
</dbReference>
<dbReference type="Gene3D" id="3.40.50.150">
    <property type="entry name" value="Vaccinia Virus protein VP39"/>
    <property type="match status" value="1"/>
</dbReference>
<dbReference type="HAMAP" id="MF_00735">
    <property type="entry name" value="Methyltr_PrmA"/>
    <property type="match status" value="1"/>
</dbReference>
<dbReference type="InterPro" id="IPR050078">
    <property type="entry name" value="Ribosomal_L11_MeTrfase_PrmA"/>
</dbReference>
<dbReference type="InterPro" id="IPR004498">
    <property type="entry name" value="Ribosomal_PrmA_MeTrfase"/>
</dbReference>
<dbReference type="InterPro" id="IPR029063">
    <property type="entry name" value="SAM-dependent_MTases_sf"/>
</dbReference>
<dbReference type="NCBIfam" id="TIGR00406">
    <property type="entry name" value="prmA"/>
    <property type="match status" value="1"/>
</dbReference>
<dbReference type="PANTHER" id="PTHR43648">
    <property type="entry name" value="ELECTRON TRANSFER FLAVOPROTEIN BETA SUBUNIT LYSINE METHYLTRANSFERASE"/>
    <property type="match status" value="1"/>
</dbReference>
<dbReference type="PANTHER" id="PTHR43648:SF1">
    <property type="entry name" value="ELECTRON TRANSFER FLAVOPROTEIN BETA SUBUNIT LYSINE METHYLTRANSFERASE"/>
    <property type="match status" value="1"/>
</dbReference>
<dbReference type="Pfam" id="PF06325">
    <property type="entry name" value="PrmA"/>
    <property type="match status" value="1"/>
</dbReference>
<dbReference type="PIRSF" id="PIRSF000401">
    <property type="entry name" value="RPL11_MTase"/>
    <property type="match status" value="1"/>
</dbReference>
<dbReference type="SUPFAM" id="SSF53335">
    <property type="entry name" value="S-adenosyl-L-methionine-dependent methyltransferases"/>
    <property type="match status" value="1"/>
</dbReference>
<protein>
    <recommendedName>
        <fullName evidence="1">Ribosomal protein L11 methyltransferase</fullName>
        <shortName evidence="1">L11 Mtase</shortName>
        <ecNumber evidence="1">2.1.1.-</ecNumber>
    </recommendedName>
</protein>
<feature type="chain" id="PRO_1000083358" description="Ribosomal protein L11 methyltransferase">
    <location>
        <begin position="1"/>
        <end position="293"/>
    </location>
</feature>
<feature type="binding site" evidence="1">
    <location>
        <position position="145"/>
    </location>
    <ligand>
        <name>S-adenosyl-L-methionine</name>
        <dbReference type="ChEBI" id="CHEBI:59789"/>
    </ligand>
</feature>
<feature type="binding site" evidence="1">
    <location>
        <position position="166"/>
    </location>
    <ligand>
        <name>S-adenosyl-L-methionine</name>
        <dbReference type="ChEBI" id="CHEBI:59789"/>
    </ligand>
</feature>
<feature type="binding site" evidence="1">
    <location>
        <position position="188"/>
    </location>
    <ligand>
        <name>S-adenosyl-L-methionine</name>
        <dbReference type="ChEBI" id="CHEBI:59789"/>
    </ligand>
</feature>
<feature type="binding site" evidence="1">
    <location>
        <position position="230"/>
    </location>
    <ligand>
        <name>S-adenosyl-L-methionine</name>
        <dbReference type="ChEBI" id="CHEBI:59789"/>
    </ligand>
</feature>